<organism>
    <name type="scientific">Lepus yarkandensis</name>
    <name type="common">Yarkand hare</name>
    <dbReference type="NCBI Taxonomy" id="301146"/>
    <lineage>
        <taxon>Eukaryota</taxon>
        <taxon>Metazoa</taxon>
        <taxon>Chordata</taxon>
        <taxon>Craniata</taxon>
        <taxon>Vertebrata</taxon>
        <taxon>Euteleostomi</taxon>
        <taxon>Mammalia</taxon>
        <taxon>Eutheria</taxon>
        <taxon>Euarchontoglires</taxon>
        <taxon>Glires</taxon>
        <taxon>Lagomorpha</taxon>
        <taxon>Leporidae</taxon>
        <taxon>Lepus</taxon>
    </lineage>
</organism>
<sequence>MTNIRKTHPLLKIVNHSLIDLPAPSNISAWWNFGSLLGLCLMIQILTGLFLAMHYTSDTATAFSSVTHICRDVNYGWLIRYLHANGASTFFICLYMHVGRGIYYGSYTYLETWNIGIILLFAVMATAFMGYVLPWGQMSFWGATVITNLLSAIPYIGTTLVEWIWGGFSVDKATLTRFFAFHFILPFIIAALVMIHLLFLHETGSNNPSGIPSDSDKIPFHPYYTIKDVLGFLMVILLLMLLVLFSPDLLGDPDNYTPANPLNTPPHIKPEWYFLFAYAILRSIPNKLGGVLALVMSILILAIIPFLHMSKQRSMMFRPISQVLFWILVADLLTLTWIGGQPVEYPFITIGQVASILYFSIILILMPLASLIENKILKW</sequence>
<evidence type="ECO:0000250" key="1"/>
<evidence type="ECO:0000250" key="2">
    <source>
        <dbReference type="UniProtKB" id="P00157"/>
    </source>
</evidence>
<evidence type="ECO:0000255" key="3">
    <source>
        <dbReference type="PROSITE-ProRule" id="PRU00967"/>
    </source>
</evidence>
<evidence type="ECO:0000255" key="4">
    <source>
        <dbReference type="PROSITE-ProRule" id="PRU00968"/>
    </source>
</evidence>
<reference key="1">
    <citation type="submission" date="2004-11" db="EMBL/GenBank/DDBJ databases">
        <authorList>
            <person name="Xia L."/>
            <person name="Yang Q."/>
        </authorList>
    </citation>
    <scope>NUCLEOTIDE SEQUENCE [GENOMIC DNA]</scope>
    <source>
        <strain>Isolate XJ02023</strain>
        <strain>Isolate XJ03057</strain>
        <strain>Isolate XJ03165</strain>
    </source>
</reference>
<feature type="chain" id="PRO_0000322122" description="Cytochrome b">
    <location>
        <begin position="1"/>
        <end position="379"/>
    </location>
</feature>
<feature type="transmembrane region" description="Helical" evidence="2">
    <location>
        <begin position="33"/>
        <end position="53"/>
    </location>
</feature>
<feature type="transmembrane region" description="Helical" evidence="2">
    <location>
        <begin position="77"/>
        <end position="98"/>
    </location>
</feature>
<feature type="transmembrane region" description="Helical" evidence="2">
    <location>
        <begin position="113"/>
        <end position="133"/>
    </location>
</feature>
<feature type="transmembrane region" description="Helical" evidence="2">
    <location>
        <begin position="178"/>
        <end position="198"/>
    </location>
</feature>
<feature type="transmembrane region" description="Helical" evidence="2">
    <location>
        <begin position="226"/>
        <end position="246"/>
    </location>
</feature>
<feature type="transmembrane region" description="Helical" evidence="2">
    <location>
        <begin position="288"/>
        <end position="308"/>
    </location>
</feature>
<feature type="transmembrane region" description="Helical" evidence="2">
    <location>
        <begin position="320"/>
        <end position="340"/>
    </location>
</feature>
<feature type="transmembrane region" description="Helical" evidence="2">
    <location>
        <begin position="347"/>
        <end position="367"/>
    </location>
</feature>
<feature type="binding site" description="axial binding residue" evidence="2">
    <location>
        <position position="83"/>
    </location>
    <ligand>
        <name>heme b</name>
        <dbReference type="ChEBI" id="CHEBI:60344"/>
        <label>b562</label>
    </ligand>
    <ligandPart>
        <name>Fe</name>
        <dbReference type="ChEBI" id="CHEBI:18248"/>
    </ligandPart>
</feature>
<feature type="binding site" description="axial binding residue" evidence="2">
    <location>
        <position position="97"/>
    </location>
    <ligand>
        <name>heme b</name>
        <dbReference type="ChEBI" id="CHEBI:60344"/>
        <label>b566</label>
    </ligand>
    <ligandPart>
        <name>Fe</name>
        <dbReference type="ChEBI" id="CHEBI:18248"/>
    </ligandPart>
</feature>
<feature type="binding site" description="axial binding residue" evidence="2">
    <location>
        <position position="182"/>
    </location>
    <ligand>
        <name>heme b</name>
        <dbReference type="ChEBI" id="CHEBI:60344"/>
        <label>b562</label>
    </ligand>
    <ligandPart>
        <name>Fe</name>
        <dbReference type="ChEBI" id="CHEBI:18248"/>
    </ligandPart>
</feature>
<feature type="binding site" description="axial binding residue" evidence="2">
    <location>
        <position position="196"/>
    </location>
    <ligand>
        <name>heme b</name>
        <dbReference type="ChEBI" id="CHEBI:60344"/>
        <label>b566</label>
    </ligand>
    <ligandPart>
        <name>Fe</name>
        <dbReference type="ChEBI" id="CHEBI:18248"/>
    </ligandPart>
</feature>
<feature type="binding site" evidence="2">
    <location>
        <position position="201"/>
    </location>
    <ligand>
        <name>a ubiquinone</name>
        <dbReference type="ChEBI" id="CHEBI:16389"/>
    </ligand>
</feature>
<feature type="sequence variant" description="In strain: Isolate XJ03057.">
    <original>A</original>
    <variation>R</variation>
    <location>
        <position position="62"/>
    </location>
</feature>
<feature type="sequence variant" description="In strain: Isolate XJ03057 and Isolate XJ03165.">
    <original>T</original>
    <variation>M</variation>
    <location>
        <position position="89"/>
    </location>
</feature>
<feature type="sequence variant" description="In strain: Isolate XJ03165.">
    <original>I</original>
    <variation>T</variation>
    <location>
        <position position="153"/>
    </location>
</feature>
<feature type="sequence variant" description="In strain: Isolate XJ03165.">
    <original>M</original>
    <variation>V</variation>
    <location>
        <position position="309"/>
    </location>
</feature>
<gene>
    <name type="primary">MT-CYB</name>
    <name type="synonym">COB</name>
    <name type="synonym">CYTB</name>
    <name type="synonym">MTCYB</name>
</gene>
<accession>A0PH66</accession>
<accession>A0PHG5</accession>
<accession>A0PHG6</accession>
<protein>
    <recommendedName>
        <fullName>Cytochrome b</fullName>
    </recommendedName>
    <alternativeName>
        <fullName>Complex III subunit 3</fullName>
    </alternativeName>
    <alternativeName>
        <fullName>Complex III subunit III</fullName>
    </alternativeName>
    <alternativeName>
        <fullName>Cytochrome b-c1 complex subunit 3</fullName>
    </alternativeName>
    <alternativeName>
        <fullName>Ubiquinol-cytochrome-c reductase complex cytochrome b subunit</fullName>
    </alternativeName>
</protein>
<name>CYB_LEPYA</name>
<comment type="function">
    <text evidence="2">Component of the ubiquinol-cytochrome c reductase complex (complex III or cytochrome b-c1 complex) that is part of the mitochondrial respiratory chain. The b-c1 complex mediates electron transfer from ubiquinol to cytochrome c. Contributes to the generation of a proton gradient across the mitochondrial membrane that is then used for ATP synthesis.</text>
</comment>
<comment type="cofactor">
    <cofactor evidence="2">
        <name>heme b</name>
        <dbReference type="ChEBI" id="CHEBI:60344"/>
    </cofactor>
    <text evidence="2">Binds 2 heme b groups non-covalently.</text>
</comment>
<comment type="subunit">
    <text evidence="2">The cytochrome bc1 complex contains 11 subunits: 3 respiratory subunits (MT-CYB, CYC1 and UQCRFS1), 2 core proteins (UQCRC1 and UQCRC2) and 6 low-molecular weight proteins (UQCRH/QCR6, UQCRB/QCR7, UQCRQ/QCR8, UQCR10/QCR9, UQCR11/QCR10 and a cleavage product of UQCRFS1). This cytochrome bc1 complex then forms a dimer.</text>
</comment>
<comment type="subcellular location">
    <subcellularLocation>
        <location evidence="2">Mitochondrion inner membrane</location>
        <topology evidence="2">Multi-pass membrane protein</topology>
    </subcellularLocation>
</comment>
<comment type="miscellaneous">
    <text evidence="1">Heme 1 (or BL or b562) is low-potential and absorbs at about 562 nm, and heme 2 (or BH or b566) is high-potential and absorbs at about 566 nm.</text>
</comment>
<comment type="similarity">
    <text evidence="3 4">Belongs to the cytochrome b family.</text>
</comment>
<comment type="caution">
    <text evidence="2">The full-length protein contains only eight transmembrane helices, not nine as predicted by bioinformatics tools.</text>
</comment>
<dbReference type="EMBL" id="AY839040">
    <property type="protein sequence ID" value="AAX40845.1"/>
    <property type="molecule type" value="Genomic_DNA"/>
</dbReference>
<dbReference type="EMBL" id="AY839041">
    <property type="protein sequence ID" value="AAX40846.1"/>
    <property type="molecule type" value="Genomic_DNA"/>
</dbReference>
<dbReference type="EMBL" id="AY838941">
    <property type="protein sequence ID" value="AAX40746.1"/>
    <property type="molecule type" value="Genomic_DNA"/>
</dbReference>
<dbReference type="SMR" id="A0PH66"/>
<dbReference type="GO" id="GO:0005743">
    <property type="term" value="C:mitochondrial inner membrane"/>
    <property type="evidence" value="ECO:0007669"/>
    <property type="project" value="UniProtKB-SubCell"/>
</dbReference>
<dbReference type="GO" id="GO:0045275">
    <property type="term" value="C:respiratory chain complex III"/>
    <property type="evidence" value="ECO:0007669"/>
    <property type="project" value="InterPro"/>
</dbReference>
<dbReference type="GO" id="GO:0046872">
    <property type="term" value="F:metal ion binding"/>
    <property type="evidence" value="ECO:0007669"/>
    <property type="project" value="UniProtKB-KW"/>
</dbReference>
<dbReference type="GO" id="GO:0008121">
    <property type="term" value="F:ubiquinol-cytochrome-c reductase activity"/>
    <property type="evidence" value="ECO:0007669"/>
    <property type="project" value="InterPro"/>
</dbReference>
<dbReference type="GO" id="GO:0006122">
    <property type="term" value="P:mitochondrial electron transport, ubiquinol to cytochrome c"/>
    <property type="evidence" value="ECO:0007669"/>
    <property type="project" value="TreeGrafter"/>
</dbReference>
<dbReference type="CDD" id="cd00290">
    <property type="entry name" value="cytochrome_b_C"/>
    <property type="match status" value="1"/>
</dbReference>
<dbReference type="CDD" id="cd00284">
    <property type="entry name" value="Cytochrome_b_N"/>
    <property type="match status" value="1"/>
</dbReference>
<dbReference type="FunFam" id="1.20.810.10:FF:000002">
    <property type="entry name" value="Cytochrome b"/>
    <property type="match status" value="1"/>
</dbReference>
<dbReference type="Gene3D" id="1.20.810.10">
    <property type="entry name" value="Cytochrome Bc1 Complex, Chain C"/>
    <property type="match status" value="1"/>
</dbReference>
<dbReference type="InterPro" id="IPR005798">
    <property type="entry name" value="Cyt_b/b6_C"/>
</dbReference>
<dbReference type="InterPro" id="IPR036150">
    <property type="entry name" value="Cyt_b/b6_C_sf"/>
</dbReference>
<dbReference type="InterPro" id="IPR005797">
    <property type="entry name" value="Cyt_b/b6_N"/>
</dbReference>
<dbReference type="InterPro" id="IPR027387">
    <property type="entry name" value="Cytb/b6-like_sf"/>
</dbReference>
<dbReference type="InterPro" id="IPR030689">
    <property type="entry name" value="Cytochrome_b"/>
</dbReference>
<dbReference type="InterPro" id="IPR048260">
    <property type="entry name" value="Cytochrome_b_C_euk/bac"/>
</dbReference>
<dbReference type="InterPro" id="IPR048259">
    <property type="entry name" value="Cytochrome_b_N_euk/bac"/>
</dbReference>
<dbReference type="InterPro" id="IPR016174">
    <property type="entry name" value="Di-haem_cyt_TM"/>
</dbReference>
<dbReference type="PANTHER" id="PTHR19271">
    <property type="entry name" value="CYTOCHROME B"/>
    <property type="match status" value="1"/>
</dbReference>
<dbReference type="PANTHER" id="PTHR19271:SF16">
    <property type="entry name" value="CYTOCHROME B"/>
    <property type="match status" value="1"/>
</dbReference>
<dbReference type="Pfam" id="PF00032">
    <property type="entry name" value="Cytochrom_B_C"/>
    <property type="match status" value="1"/>
</dbReference>
<dbReference type="Pfam" id="PF00033">
    <property type="entry name" value="Cytochrome_B"/>
    <property type="match status" value="1"/>
</dbReference>
<dbReference type="PIRSF" id="PIRSF038885">
    <property type="entry name" value="COB"/>
    <property type="match status" value="1"/>
</dbReference>
<dbReference type="SUPFAM" id="SSF81648">
    <property type="entry name" value="a domain/subunit of cytochrome bc1 complex (Ubiquinol-cytochrome c reductase)"/>
    <property type="match status" value="1"/>
</dbReference>
<dbReference type="SUPFAM" id="SSF81342">
    <property type="entry name" value="Transmembrane di-heme cytochromes"/>
    <property type="match status" value="1"/>
</dbReference>
<dbReference type="PROSITE" id="PS51003">
    <property type="entry name" value="CYTB_CTER"/>
    <property type="match status" value="1"/>
</dbReference>
<dbReference type="PROSITE" id="PS51002">
    <property type="entry name" value="CYTB_NTER"/>
    <property type="match status" value="1"/>
</dbReference>
<keyword id="KW-0249">Electron transport</keyword>
<keyword id="KW-0349">Heme</keyword>
<keyword id="KW-0408">Iron</keyword>
<keyword id="KW-0472">Membrane</keyword>
<keyword id="KW-0479">Metal-binding</keyword>
<keyword id="KW-0496">Mitochondrion</keyword>
<keyword id="KW-0999">Mitochondrion inner membrane</keyword>
<keyword id="KW-0679">Respiratory chain</keyword>
<keyword id="KW-0812">Transmembrane</keyword>
<keyword id="KW-1133">Transmembrane helix</keyword>
<keyword id="KW-0813">Transport</keyword>
<keyword id="KW-0830">Ubiquinone</keyword>
<proteinExistence type="inferred from homology"/>
<geneLocation type="mitochondrion"/>